<sequence>MNTMTDAAHLAADPRYDAAREIRAPRGTELHCKSWLTEAAYRMLQNNLDPDVAENPKHLVVYGGIGRAARDWACFDKILETLRELNDDESLLVQSGKPVGVFKTHPDAPRVLIANSNLVPKWANWEHFNALDRKGLFMYGQMTAGSWIYIGSQGIVQGTYETFAEAGRQHYSDRPSALLKQGLSPEGTAPGSGRSSAQVPGSHLAGRWILTAGLGGMGGAQPLAATLAGAVSLTIECQQSSIDFRLRTRYLDKQARDIDDALNLIRHHCERGEAVSIGLLGNAAELLPELVRRARAGGLKPDLVTDQTSAHDLVNGYLPAGWTVEQWRAAQRDPAQHAHLSAEAARSCAVHVQAMLDFQSMGIPTVDYGNNIRQVAFDQGVKNAFDFPGFVPAYIRPLFCEGRGPFRWVALSGDPEDIYKTDAKIKELFPHNAHVHRWLDMARERIAFQGLPARICWLGLGERHAAGLAFNEMVRKGELKAPIVIGRDHLDTGSVASPNRETEAMRDGTDAVSDWPLLNALLNTAGGATWVSLHHGGGVGMGYSQHAGVVIVADGTDAAARRLARVLVNDAGSGVMRHADAGYETAVACAKRNGLKLPMIG</sequence>
<proteinExistence type="inferred from homology"/>
<feature type="chain" id="PRO_0000207348" description="Urocanate hydratase">
    <location>
        <begin position="1"/>
        <end position="601"/>
    </location>
</feature>
<feature type="region of interest" description="Insert">
    <location>
        <begin position="172"/>
        <end position="201"/>
    </location>
</feature>
<feature type="region of interest" description="Disordered" evidence="2">
    <location>
        <begin position="179"/>
        <end position="200"/>
    </location>
</feature>
<feature type="active site" evidence="1">
    <location>
        <position position="456"/>
    </location>
</feature>
<feature type="binding site" evidence="1">
    <location>
        <begin position="63"/>
        <end position="64"/>
    </location>
    <ligand>
        <name>NAD(+)</name>
        <dbReference type="ChEBI" id="CHEBI:57540"/>
    </ligand>
</feature>
<feature type="binding site" evidence="1">
    <location>
        <position position="141"/>
    </location>
    <ligand>
        <name>NAD(+)</name>
        <dbReference type="ChEBI" id="CHEBI:57540"/>
    </ligand>
</feature>
<feature type="binding site" evidence="1">
    <location>
        <begin position="216"/>
        <end position="218"/>
    </location>
    <ligand>
        <name>NAD(+)</name>
        <dbReference type="ChEBI" id="CHEBI:57540"/>
    </ligand>
</feature>
<feature type="binding site" evidence="1">
    <location>
        <position position="236"/>
    </location>
    <ligand>
        <name>NAD(+)</name>
        <dbReference type="ChEBI" id="CHEBI:57540"/>
    </ligand>
</feature>
<feature type="binding site" evidence="1">
    <location>
        <begin position="282"/>
        <end position="283"/>
    </location>
    <ligand>
        <name>NAD(+)</name>
        <dbReference type="ChEBI" id="CHEBI:57540"/>
    </ligand>
</feature>
<feature type="binding site" evidence="1">
    <location>
        <begin position="307"/>
        <end position="311"/>
    </location>
    <ligand>
        <name>NAD(+)</name>
        <dbReference type="ChEBI" id="CHEBI:57540"/>
    </ligand>
</feature>
<feature type="binding site" evidence="1">
    <location>
        <begin position="317"/>
        <end position="318"/>
    </location>
    <ligand>
        <name>NAD(+)</name>
        <dbReference type="ChEBI" id="CHEBI:57540"/>
    </ligand>
</feature>
<feature type="binding site" evidence="1">
    <location>
        <position position="368"/>
    </location>
    <ligand>
        <name>NAD(+)</name>
        <dbReference type="ChEBI" id="CHEBI:57540"/>
    </ligand>
</feature>
<feature type="binding site" evidence="1">
    <location>
        <position position="538"/>
    </location>
    <ligand>
        <name>NAD(+)</name>
        <dbReference type="ChEBI" id="CHEBI:57540"/>
    </ligand>
</feature>
<accession>Q8XW28</accession>
<evidence type="ECO:0000255" key="1">
    <source>
        <dbReference type="HAMAP-Rule" id="MF_00577"/>
    </source>
</evidence>
<evidence type="ECO:0000256" key="2">
    <source>
        <dbReference type="SAM" id="MobiDB-lite"/>
    </source>
</evidence>
<protein>
    <recommendedName>
        <fullName evidence="1">Urocanate hydratase</fullName>
        <shortName evidence="1">Urocanase</shortName>
        <ecNumber evidence="1">4.2.1.49</ecNumber>
    </recommendedName>
    <alternativeName>
        <fullName evidence="1">Imidazolonepropionate hydrolase</fullName>
    </alternativeName>
</protein>
<gene>
    <name evidence="1" type="primary">hutU</name>
    <name type="ordered locus">RSc2647</name>
    <name type="ORF">RS04569</name>
</gene>
<keyword id="KW-0963">Cytoplasm</keyword>
<keyword id="KW-0369">Histidine metabolism</keyword>
<keyword id="KW-0456">Lyase</keyword>
<keyword id="KW-0520">NAD</keyword>
<keyword id="KW-1185">Reference proteome</keyword>
<dbReference type="EC" id="4.2.1.49" evidence="1"/>
<dbReference type="EMBL" id="AL646052">
    <property type="protein sequence ID" value="CAD16354.1"/>
    <property type="molecule type" value="Genomic_DNA"/>
</dbReference>
<dbReference type="RefSeq" id="WP_011002557.1">
    <property type="nucleotide sequence ID" value="NC_003295.1"/>
</dbReference>
<dbReference type="SMR" id="Q8XW28"/>
<dbReference type="STRING" id="267608.RSc2647"/>
<dbReference type="EnsemblBacteria" id="CAD16354">
    <property type="protein sequence ID" value="CAD16354"/>
    <property type="gene ID" value="RSc2647"/>
</dbReference>
<dbReference type="KEGG" id="rso:RSc2647"/>
<dbReference type="PATRIC" id="fig|267608.8.peg.2688"/>
<dbReference type="eggNOG" id="COG2987">
    <property type="taxonomic scope" value="Bacteria"/>
</dbReference>
<dbReference type="HOGENOM" id="CLU_018868_0_1_4"/>
<dbReference type="UniPathway" id="UPA00379">
    <property type="reaction ID" value="UER00550"/>
</dbReference>
<dbReference type="Proteomes" id="UP000001436">
    <property type="component" value="Chromosome"/>
</dbReference>
<dbReference type="GO" id="GO:0005737">
    <property type="term" value="C:cytoplasm"/>
    <property type="evidence" value="ECO:0007669"/>
    <property type="project" value="UniProtKB-SubCell"/>
</dbReference>
<dbReference type="GO" id="GO:0016153">
    <property type="term" value="F:urocanate hydratase activity"/>
    <property type="evidence" value="ECO:0007669"/>
    <property type="project" value="UniProtKB-UniRule"/>
</dbReference>
<dbReference type="GO" id="GO:0019556">
    <property type="term" value="P:L-histidine catabolic process to glutamate and formamide"/>
    <property type="evidence" value="ECO:0007669"/>
    <property type="project" value="UniProtKB-UniPathway"/>
</dbReference>
<dbReference type="GO" id="GO:0019557">
    <property type="term" value="P:L-histidine catabolic process to glutamate and formate"/>
    <property type="evidence" value="ECO:0007669"/>
    <property type="project" value="UniProtKB-UniPathway"/>
</dbReference>
<dbReference type="Gene3D" id="3.40.50.10730">
    <property type="entry name" value="Urocanase like domains"/>
    <property type="match status" value="1"/>
</dbReference>
<dbReference type="Gene3D" id="3.40.1770.10">
    <property type="entry name" value="Urocanase superfamily"/>
    <property type="match status" value="2"/>
</dbReference>
<dbReference type="HAMAP" id="MF_00577">
    <property type="entry name" value="HutU"/>
    <property type="match status" value="1"/>
</dbReference>
<dbReference type="InterPro" id="IPR055351">
    <property type="entry name" value="Urocanase"/>
</dbReference>
<dbReference type="InterPro" id="IPR023637">
    <property type="entry name" value="Urocanase-like"/>
</dbReference>
<dbReference type="InterPro" id="IPR035401">
    <property type="entry name" value="Urocanase_C"/>
</dbReference>
<dbReference type="InterPro" id="IPR038364">
    <property type="entry name" value="Urocanase_central_sf"/>
</dbReference>
<dbReference type="InterPro" id="IPR023636">
    <property type="entry name" value="Urocanase_CS"/>
</dbReference>
<dbReference type="InterPro" id="IPR035400">
    <property type="entry name" value="Urocanase_N"/>
</dbReference>
<dbReference type="InterPro" id="IPR035085">
    <property type="entry name" value="Urocanase_Rossmann-like"/>
</dbReference>
<dbReference type="InterPro" id="IPR036190">
    <property type="entry name" value="Urocanase_sf"/>
</dbReference>
<dbReference type="NCBIfam" id="TIGR01228">
    <property type="entry name" value="hutU"/>
    <property type="match status" value="1"/>
</dbReference>
<dbReference type="NCBIfam" id="NF003820">
    <property type="entry name" value="PRK05414.1"/>
    <property type="match status" value="1"/>
</dbReference>
<dbReference type="PANTHER" id="PTHR12216">
    <property type="entry name" value="UROCANATE HYDRATASE"/>
    <property type="match status" value="1"/>
</dbReference>
<dbReference type="PANTHER" id="PTHR12216:SF4">
    <property type="entry name" value="UROCANATE HYDRATASE"/>
    <property type="match status" value="1"/>
</dbReference>
<dbReference type="Pfam" id="PF01175">
    <property type="entry name" value="Urocanase"/>
    <property type="match status" value="2"/>
</dbReference>
<dbReference type="Pfam" id="PF17392">
    <property type="entry name" value="Urocanase_C"/>
    <property type="match status" value="1"/>
</dbReference>
<dbReference type="Pfam" id="PF17391">
    <property type="entry name" value="Urocanase_N"/>
    <property type="match status" value="1"/>
</dbReference>
<dbReference type="PIRSF" id="PIRSF001423">
    <property type="entry name" value="Urocanate_hydrat"/>
    <property type="match status" value="1"/>
</dbReference>
<dbReference type="SUPFAM" id="SSF111326">
    <property type="entry name" value="Urocanase"/>
    <property type="match status" value="1"/>
</dbReference>
<dbReference type="PROSITE" id="PS01233">
    <property type="entry name" value="UROCANASE"/>
    <property type="match status" value="1"/>
</dbReference>
<name>HUTU_RALN1</name>
<reference key="1">
    <citation type="journal article" date="2002" name="Nature">
        <title>Genome sequence of the plant pathogen Ralstonia solanacearum.</title>
        <authorList>
            <person name="Salanoubat M."/>
            <person name="Genin S."/>
            <person name="Artiguenave F."/>
            <person name="Gouzy J."/>
            <person name="Mangenot S."/>
            <person name="Arlat M."/>
            <person name="Billault A."/>
            <person name="Brottier P."/>
            <person name="Camus J.-C."/>
            <person name="Cattolico L."/>
            <person name="Chandler M."/>
            <person name="Choisne N."/>
            <person name="Claudel-Renard C."/>
            <person name="Cunnac S."/>
            <person name="Demange N."/>
            <person name="Gaspin C."/>
            <person name="Lavie M."/>
            <person name="Moisan A."/>
            <person name="Robert C."/>
            <person name="Saurin W."/>
            <person name="Schiex T."/>
            <person name="Siguier P."/>
            <person name="Thebault P."/>
            <person name="Whalen M."/>
            <person name="Wincker P."/>
            <person name="Levy M."/>
            <person name="Weissenbach J."/>
            <person name="Boucher C.A."/>
        </authorList>
    </citation>
    <scope>NUCLEOTIDE SEQUENCE [LARGE SCALE GENOMIC DNA]</scope>
    <source>
        <strain>ATCC BAA-1114 / GMI1000</strain>
    </source>
</reference>
<comment type="function">
    <text evidence="1">Catalyzes the conversion of urocanate to 4-imidazolone-5-propionate.</text>
</comment>
<comment type="catalytic activity">
    <reaction evidence="1">
        <text>4-imidazolone-5-propanoate = trans-urocanate + H2O</text>
        <dbReference type="Rhea" id="RHEA:13101"/>
        <dbReference type="ChEBI" id="CHEBI:15377"/>
        <dbReference type="ChEBI" id="CHEBI:17771"/>
        <dbReference type="ChEBI" id="CHEBI:77893"/>
        <dbReference type="EC" id="4.2.1.49"/>
    </reaction>
</comment>
<comment type="cofactor">
    <cofactor evidence="1">
        <name>NAD(+)</name>
        <dbReference type="ChEBI" id="CHEBI:57540"/>
    </cofactor>
    <text evidence="1">Binds 1 NAD(+) per subunit.</text>
</comment>
<comment type="pathway">
    <text evidence="1">Amino-acid degradation; L-histidine degradation into L-glutamate; N-formimidoyl-L-glutamate from L-histidine: step 2/3.</text>
</comment>
<comment type="subcellular location">
    <subcellularLocation>
        <location evidence="1">Cytoplasm</location>
    </subcellularLocation>
</comment>
<comment type="similarity">
    <text evidence="1">Belongs to the urocanase family.</text>
</comment>
<organism>
    <name type="scientific">Ralstonia nicotianae (strain ATCC BAA-1114 / GMI1000)</name>
    <name type="common">Ralstonia solanacearum</name>
    <dbReference type="NCBI Taxonomy" id="267608"/>
    <lineage>
        <taxon>Bacteria</taxon>
        <taxon>Pseudomonadati</taxon>
        <taxon>Pseudomonadota</taxon>
        <taxon>Betaproteobacteria</taxon>
        <taxon>Burkholderiales</taxon>
        <taxon>Burkholderiaceae</taxon>
        <taxon>Ralstonia</taxon>
        <taxon>Ralstonia solanacearum species complex</taxon>
    </lineage>
</organism>